<name>DSBB_XYLFT</name>
<organism>
    <name type="scientific">Xylella fastidiosa (strain Temecula1 / ATCC 700964)</name>
    <dbReference type="NCBI Taxonomy" id="183190"/>
    <lineage>
        <taxon>Bacteria</taxon>
        <taxon>Pseudomonadati</taxon>
        <taxon>Pseudomonadota</taxon>
        <taxon>Gammaproteobacteria</taxon>
        <taxon>Lysobacterales</taxon>
        <taxon>Lysobacteraceae</taxon>
        <taxon>Xylella</taxon>
    </lineage>
</organism>
<proteinExistence type="inferred from homology"/>
<protein>
    <recommendedName>
        <fullName evidence="1">Disulfide bond formation protein B</fullName>
    </recommendedName>
    <alternativeName>
        <fullName evidence="1">Disulfide oxidoreductase</fullName>
    </alternativeName>
</protein>
<dbReference type="EMBL" id="AE009442">
    <property type="protein sequence ID" value="AAO29548.1"/>
    <property type="molecule type" value="Genomic_DNA"/>
</dbReference>
<dbReference type="RefSeq" id="WP_004089936.1">
    <property type="nucleotide sequence ID" value="NC_004556.1"/>
</dbReference>
<dbReference type="SMR" id="Q87AV3"/>
<dbReference type="KEGG" id="xft:PD_1710"/>
<dbReference type="HOGENOM" id="CLU_098660_1_1_6"/>
<dbReference type="Proteomes" id="UP000002516">
    <property type="component" value="Chromosome"/>
</dbReference>
<dbReference type="GO" id="GO:0005886">
    <property type="term" value="C:plasma membrane"/>
    <property type="evidence" value="ECO:0007669"/>
    <property type="project" value="UniProtKB-SubCell"/>
</dbReference>
<dbReference type="GO" id="GO:0009055">
    <property type="term" value="F:electron transfer activity"/>
    <property type="evidence" value="ECO:0007669"/>
    <property type="project" value="UniProtKB-UniRule"/>
</dbReference>
<dbReference type="GO" id="GO:0015035">
    <property type="term" value="F:protein-disulfide reductase activity"/>
    <property type="evidence" value="ECO:0007669"/>
    <property type="project" value="UniProtKB-UniRule"/>
</dbReference>
<dbReference type="GO" id="GO:0006457">
    <property type="term" value="P:protein folding"/>
    <property type="evidence" value="ECO:0007669"/>
    <property type="project" value="InterPro"/>
</dbReference>
<dbReference type="Gene3D" id="1.20.1550.10">
    <property type="entry name" value="DsbB-like"/>
    <property type="match status" value="1"/>
</dbReference>
<dbReference type="HAMAP" id="MF_00286">
    <property type="entry name" value="DsbB"/>
    <property type="match status" value="1"/>
</dbReference>
<dbReference type="InterPro" id="IPR003752">
    <property type="entry name" value="DiS_bond_form_DsbB/BdbC"/>
</dbReference>
<dbReference type="InterPro" id="IPR022920">
    <property type="entry name" value="Disulphide_bond_form_DsbB"/>
</dbReference>
<dbReference type="InterPro" id="IPR050183">
    <property type="entry name" value="DsbB"/>
</dbReference>
<dbReference type="InterPro" id="IPR023380">
    <property type="entry name" value="DsbB-like_sf"/>
</dbReference>
<dbReference type="NCBIfam" id="NF003354">
    <property type="entry name" value="PRK04388.1"/>
    <property type="match status" value="1"/>
</dbReference>
<dbReference type="PANTHER" id="PTHR36570">
    <property type="entry name" value="DISULFIDE BOND FORMATION PROTEIN B"/>
    <property type="match status" value="1"/>
</dbReference>
<dbReference type="PANTHER" id="PTHR36570:SF3">
    <property type="entry name" value="DISULFIDE BOND FORMATION PROTEIN B"/>
    <property type="match status" value="1"/>
</dbReference>
<dbReference type="Pfam" id="PF02600">
    <property type="entry name" value="DsbB"/>
    <property type="match status" value="1"/>
</dbReference>
<dbReference type="SUPFAM" id="SSF158442">
    <property type="entry name" value="DsbB-like"/>
    <property type="match status" value="1"/>
</dbReference>
<sequence length="173" mass="19272">MNALQWSFRAQCLTGFLFCTGLLAYAIFLQLHQGLEPCPLCIFQRIAFAVLGILFLIAGLYNSSNVYTRKAYGLLIFLTAIIGTGIAGRHVWVQLMPHNTISSCGSPLSFLSETMGPFEVFRTVLTGTSNCGNIDWRFLGLSMPMWSMFWFVALALLGLLVGFKAERRKPLFS</sequence>
<keyword id="KW-0997">Cell inner membrane</keyword>
<keyword id="KW-1003">Cell membrane</keyword>
<keyword id="KW-0143">Chaperone</keyword>
<keyword id="KW-1015">Disulfide bond</keyword>
<keyword id="KW-0249">Electron transport</keyword>
<keyword id="KW-0472">Membrane</keyword>
<keyword id="KW-0560">Oxidoreductase</keyword>
<keyword id="KW-0676">Redox-active center</keyword>
<keyword id="KW-1185">Reference proteome</keyword>
<keyword id="KW-0812">Transmembrane</keyword>
<keyword id="KW-1133">Transmembrane helix</keyword>
<keyword id="KW-0813">Transport</keyword>
<gene>
    <name evidence="1" type="primary">dsbB</name>
    <name type="ordered locus">PD_1710</name>
</gene>
<evidence type="ECO:0000255" key="1">
    <source>
        <dbReference type="HAMAP-Rule" id="MF_00286"/>
    </source>
</evidence>
<feature type="chain" id="PRO_0000059368" description="Disulfide bond formation protein B">
    <location>
        <begin position="1"/>
        <end position="173"/>
    </location>
</feature>
<feature type="topological domain" description="Cytoplasmic" evidence="1">
    <location>
        <begin position="1"/>
        <end position="11"/>
    </location>
</feature>
<feature type="transmembrane region" description="Helical" evidence="1">
    <location>
        <begin position="12"/>
        <end position="28"/>
    </location>
</feature>
<feature type="topological domain" description="Periplasmic" evidence="1">
    <location>
        <begin position="29"/>
        <end position="46"/>
    </location>
</feature>
<feature type="transmembrane region" description="Helical" evidence="1">
    <location>
        <begin position="47"/>
        <end position="63"/>
    </location>
</feature>
<feature type="topological domain" description="Cytoplasmic" evidence="1">
    <location>
        <begin position="64"/>
        <end position="70"/>
    </location>
</feature>
<feature type="transmembrane region" description="Helical" evidence="1">
    <location>
        <begin position="71"/>
        <end position="88"/>
    </location>
</feature>
<feature type="topological domain" description="Periplasmic" evidence="1">
    <location>
        <begin position="89"/>
        <end position="145"/>
    </location>
</feature>
<feature type="transmembrane region" description="Helical" evidence="1">
    <location>
        <begin position="146"/>
        <end position="164"/>
    </location>
</feature>
<feature type="topological domain" description="Cytoplasmic" evidence="1">
    <location>
        <begin position="165"/>
        <end position="173"/>
    </location>
</feature>
<feature type="disulfide bond" description="Redox-active" evidence="1">
    <location>
        <begin position="38"/>
        <end position="41"/>
    </location>
</feature>
<feature type="disulfide bond" description="Redox-active" evidence="1">
    <location>
        <begin position="104"/>
        <end position="131"/>
    </location>
</feature>
<comment type="function">
    <text evidence="1">Required for disulfide bond formation in some periplasmic proteins. Acts by oxidizing the DsbA protein.</text>
</comment>
<comment type="subcellular location">
    <subcellularLocation>
        <location evidence="1">Cell inner membrane</location>
        <topology evidence="1">Multi-pass membrane protein</topology>
    </subcellularLocation>
</comment>
<comment type="similarity">
    <text evidence="1">Belongs to the DsbB family.</text>
</comment>
<reference key="1">
    <citation type="journal article" date="2003" name="J. Bacteriol.">
        <title>Comparative analyses of the complete genome sequences of Pierce's disease and citrus variegated chlorosis strains of Xylella fastidiosa.</title>
        <authorList>
            <person name="Van Sluys M.A."/>
            <person name="de Oliveira M.C."/>
            <person name="Monteiro-Vitorello C.B."/>
            <person name="Miyaki C.Y."/>
            <person name="Furlan L.R."/>
            <person name="Camargo L.E.A."/>
            <person name="da Silva A.C.R."/>
            <person name="Moon D.H."/>
            <person name="Takita M.A."/>
            <person name="Lemos E.G.M."/>
            <person name="Machado M.A."/>
            <person name="Ferro M.I.T."/>
            <person name="da Silva F.R."/>
            <person name="Goldman M.H.S."/>
            <person name="Goldman G.H."/>
            <person name="Lemos M.V.F."/>
            <person name="El-Dorry H."/>
            <person name="Tsai S.M."/>
            <person name="Carrer H."/>
            <person name="Carraro D.M."/>
            <person name="de Oliveira R.C."/>
            <person name="Nunes L.R."/>
            <person name="Siqueira W.J."/>
            <person name="Coutinho L.L."/>
            <person name="Kimura E.T."/>
            <person name="Ferro E.S."/>
            <person name="Harakava R."/>
            <person name="Kuramae E.E."/>
            <person name="Marino C.L."/>
            <person name="Giglioti E."/>
            <person name="Abreu I.L."/>
            <person name="Alves L.M.C."/>
            <person name="do Amaral A.M."/>
            <person name="Baia G.S."/>
            <person name="Blanco S.R."/>
            <person name="Brito M.S."/>
            <person name="Cannavan F.S."/>
            <person name="Celestino A.V."/>
            <person name="da Cunha A.F."/>
            <person name="Fenille R.C."/>
            <person name="Ferro J.A."/>
            <person name="Formighieri E.F."/>
            <person name="Kishi L.T."/>
            <person name="Leoni S.G."/>
            <person name="Oliveira A.R."/>
            <person name="Rosa V.E. Jr."/>
            <person name="Sassaki F.T."/>
            <person name="Sena J.A.D."/>
            <person name="de Souza A.A."/>
            <person name="Truffi D."/>
            <person name="Tsukumo F."/>
            <person name="Yanai G.M."/>
            <person name="Zaros L.G."/>
            <person name="Civerolo E.L."/>
            <person name="Simpson A.J.G."/>
            <person name="Almeida N.F. Jr."/>
            <person name="Setubal J.C."/>
            <person name="Kitajima J.P."/>
        </authorList>
    </citation>
    <scope>NUCLEOTIDE SEQUENCE [LARGE SCALE GENOMIC DNA]</scope>
    <source>
        <strain>Temecula1 / ATCC 700964</strain>
    </source>
</reference>
<accession>Q87AV3</accession>